<sequence length="293" mass="31598">MLKGSITALVTPFDREGAFDEKAFRAFVNWQIEEGTKGLVPVGTTGETPTLSHDEHKRVIEVCIEVAAGRVPVIAGAGSNNTVEAIELAQHAEKAGADAVLVVTPYYNKPNQRGLYEHFSRVVRSISIPLVIYNIPGRSIIDMTPETMGALVRDCKNIVGVKDATGKIERVSEQRAICGKEFIQLSGEDATALGFNAHGGVGCISVTSNIAPRLCAEFQEACQAGNFAKALELQDRLMPLHKALFLEPNPSGPKYALSRLGRIENVLRSPMVTIEAATAEKIDHAMKHAGLIN</sequence>
<gene>
    <name evidence="1" type="primary">dapA</name>
    <name type="ordered locus">BR0646</name>
    <name type="ordered locus">BS1330_I0642</name>
</gene>
<proteinExistence type="evidence at protein level"/>
<protein>
    <recommendedName>
        <fullName evidence="1">4-hydroxy-tetrahydrodipicolinate synthase</fullName>
        <shortName evidence="1">HTPA synthase</shortName>
        <ecNumber evidence="1">4.3.3.7</ecNumber>
    </recommendedName>
</protein>
<evidence type="ECO:0000255" key="1">
    <source>
        <dbReference type="HAMAP-Rule" id="MF_00418"/>
    </source>
</evidence>
<evidence type="ECO:0000305" key="2"/>
<evidence type="ECO:0007829" key="3">
    <source>
        <dbReference type="PDB" id="6XGS"/>
    </source>
</evidence>
<comment type="function">
    <text evidence="1">Catalyzes the condensation of (S)-aspartate-beta-semialdehyde [(S)-ASA] and pyruvate to 4-hydroxy-tetrahydrodipicolinate (HTPA).</text>
</comment>
<comment type="catalytic activity">
    <reaction evidence="1">
        <text>L-aspartate 4-semialdehyde + pyruvate = (2S,4S)-4-hydroxy-2,3,4,5-tetrahydrodipicolinate + H2O + H(+)</text>
        <dbReference type="Rhea" id="RHEA:34171"/>
        <dbReference type="ChEBI" id="CHEBI:15361"/>
        <dbReference type="ChEBI" id="CHEBI:15377"/>
        <dbReference type="ChEBI" id="CHEBI:15378"/>
        <dbReference type="ChEBI" id="CHEBI:67139"/>
        <dbReference type="ChEBI" id="CHEBI:537519"/>
        <dbReference type="EC" id="4.3.3.7"/>
    </reaction>
</comment>
<comment type="pathway">
    <text evidence="1">Amino-acid biosynthesis; L-lysine biosynthesis via DAP pathway; (S)-tetrahydrodipicolinate from L-aspartate: step 3/4.</text>
</comment>
<comment type="subunit">
    <text evidence="1">Homotetramer; dimer of dimers.</text>
</comment>
<comment type="subcellular location">
    <subcellularLocation>
        <location evidence="1">Cytoplasm</location>
    </subcellularLocation>
</comment>
<comment type="similarity">
    <text evidence="1">Belongs to the DapA family.</text>
</comment>
<comment type="caution">
    <text evidence="2">Was originally thought to be a dihydrodipicolinate synthase (DHDPS), catalyzing the condensation of (S)-aspartate-beta-semialdehyde [(S)-ASA] and pyruvate to dihydrodipicolinate (DHDP). However, it was shown in E.coli that the product of the enzymatic reaction is not dihydrodipicolinate but in fact (4S)-4-hydroxy-2,3,4,5-tetrahydro-(2S)-dipicolinic acid (HTPA), and that the consecutive dehydration reaction leading to DHDP is not spontaneous but catalyzed by DapB.</text>
</comment>
<name>DAPA_BRUSU</name>
<dbReference type="EC" id="4.3.3.7" evidence="1"/>
<dbReference type="EMBL" id="AE014291">
    <property type="protein sequence ID" value="AAN29575.1"/>
    <property type="molecule type" value="Genomic_DNA"/>
</dbReference>
<dbReference type="EMBL" id="CP002997">
    <property type="protein sequence ID" value="AEM17992.1"/>
    <property type="molecule type" value="Genomic_DNA"/>
</dbReference>
<dbReference type="RefSeq" id="WP_004690695.1">
    <property type="nucleotide sequence ID" value="NZ_KN046804.1"/>
</dbReference>
<dbReference type="PDB" id="6XGS">
    <property type="method" value="X-ray"/>
    <property type="resolution" value="2.20 A"/>
    <property type="chains" value="A/B/C/D=1-293"/>
</dbReference>
<dbReference type="PDBsum" id="6XGS"/>
<dbReference type="SMR" id="Q8G1R0"/>
<dbReference type="GeneID" id="55590373"/>
<dbReference type="KEGG" id="bms:BR0646"/>
<dbReference type="KEGG" id="bsi:BS1330_I0642"/>
<dbReference type="PATRIC" id="fig|204722.21.peg.1533"/>
<dbReference type="HOGENOM" id="CLU_049343_7_1_5"/>
<dbReference type="PhylomeDB" id="Q8G1R0"/>
<dbReference type="UniPathway" id="UPA00034">
    <property type="reaction ID" value="UER00017"/>
</dbReference>
<dbReference type="Proteomes" id="UP000007104">
    <property type="component" value="Chromosome I"/>
</dbReference>
<dbReference type="GO" id="GO:0005829">
    <property type="term" value="C:cytosol"/>
    <property type="evidence" value="ECO:0007669"/>
    <property type="project" value="TreeGrafter"/>
</dbReference>
<dbReference type="GO" id="GO:0008840">
    <property type="term" value="F:4-hydroxy-tetrahydrodipicolinate synthase activity"/>
    <property type="evidence" value="ECO:0007669"/>
    <property type="project" value="UniProtKB-UniRule"/>
</dbReference>
<dbReference type="GO" id="GO:0019877">
    <property type="term" value="P:diaminopimelate biosynthetic process"/>
    <property type="evidence" value="ECO:0007669"/>
    <property type="project" value="UniProtKB-UniRule"/>
</dbReference>
<dbReference type="GO" id="GO:0009089">
    <property type="term" value="P:lysine biosynthetic process via diaminopimelate"/>
    <property type="evidence" value="ECO:0007669"/>
    <property type="project" value="UniProtKB-UniRule"/>
</dbReference>
<dbReference type="CDD" id="cd00950">
    <property type="entry name" value="DHDPS"/>
    <property type="match status" value="1"/>
</dbReference>
<dbReference type="Gene3D" id="3.20.20.70">
    <property type="entry name" value="Aldolase class I"/>
    <property type="match status" value="1"/>
</dbReference>
<dbReference type="HAMAP" id="MF_00418">
    <property type="entry name" value="DapA"/>
    <property type="match status" value="1"/>
</dbReference>
<dbReference type="InterPro" id="IPR013785">
    <property type="entry name" value="Aldolase_TIM"/>
</dbReference>
<dbReference type="InterPro" id="IPR005263">
    <property type="entry name" value="DapA"/>
</dbReference>
<dbReference type="InterPro" id="IPR002220">
    <property type="entry name" value="DapA-like"/>
</dbReference>
<dbReference type="InterPro" id="IPR020625">
    <property type="entry name" value="Schiff_base-form_aldolases_AS"/>
</dbReference>
<dbReference type="NCBIfam" id="TIGR00674">
    <property type="entry name" value="dapA"/>
    <property type="match status" value="1"/>
</dbReference>
<dbReference type="PANTHER" id="PTHR12128:SF66">
    <property type="entry name" value="4-HYDROXY-2-OXOGLUTARATE ALDOLASE, MITOCHONDRIAL"/>
    <property type="match status" value="1"/>
</dbReference>
<dbReference type="PANTHER" id="PTHR12128">
    <property type="entry name" value="DIHYDRODIPICOLINATE SYNTHASE"/>
    <property type="match status" value="1"/>
</dbReference>
<dbReference type="Pfam" id="PF00701">
    <property type="entry name" value="DHDPS"/>
    <property type="match status" value="1"/>
</dbReference>
<dbReference type="PIRSF" id="PIRSF001365">
    <property type="entry name" value="DHDPS"/>
    <property type="match status" value="1"/>
</dbReference>
<dbReference type="PRINTS" id="PR00146">
    <property type="entry name" value="DHPICSNTHASE"/>
</dbReference>
<dbReference type="SMART" id="SM01130">
    <property type="entry name" value="DHDPS"/>
    <property type="match status" value="1"/>
</dbReference>
<dbReference type="SUPFAM" id="SSF51569">
    <property type="entry name" value="Aldolase"/>
    <property type="match status" value="1"/>
</dbReference>
<dbReference type="PROSITE" id="PS00666">
    <property type="entry name" value="DHDPS_2"/>
    <property type="match status" value="1"/>
</dbReference>
<accession>Q8G1R0</accession>
<accession>G0K7Y7</accession>
<keyword id="KW-0002">3D-structure</keyword>
<keyword id="KW-0028">Amino-acid biosynthesis</keyword>
<keyword id="KW-0963">Cytoplasm</keyword>
<keyword id="KW-0220">Diaminopimelate biosynthesis</keyword>
<keyword id="KW-0456">Lyase</keyword>
<keyword id="KW-0457">Lysine biosynthesis</keyword>
<keyword id="KW-0704">Schiff base</keyword>
<organism>
    <name type="scientific">Brucella suis biovar 1 (strain 1330)</name>
    <dbReference type="NCBI Taxonomy" id="204722"/>
    <lineage>
        <taxon>Bacteria</taxon>
        <taxon>Pseudomonadati</taxon>
        <taxon>Pseudomonadota</taxon>
        <taxon>Alphaproteobacteria</taxon>
        <taxon>Hyphomicrobiales</taxon>
        <taxon>Brucellaceae</taxon>
        <taxon>Brucella/Ochrobactrum group</taxon>
        <taxon>Brucella</taxon>
    </lineage>
</organism>
<feature type="chain" id="PRO_0000103089" description="4-hydroxy-tetrahydrodipicolinate synthase">
    <location>
        <begin position="1"/>
        <end position="293"/>
    </location>
</feature>
<feature type="active site" description="Proton donor/acceptor" evidence="1">
    <location>
        <position position="133"/>
    </location>
</feature>
<feature type="active site" description="Schiff-base intermediate with substrate" evidence="1">
    <location>
        <position position="162"/>
    </location>
</feature>
<feature type="binding site" evidence="1">
    <location>
        <position position="45"/>
    </location>
    <ligand>
        <name>pyruvate</name>
        <dbReference type="ChEBI" id="CHEBI:15361"/>
    </ligand>
</feature>
<feature type="binding site" evidence="1">
    <location>
        <position position="204"/>
    </location>
    <ligand>
        <name>pyruvate</name>
        <dbReference type="ChEBI" id="CHEBI:15361"/>
    </ligand>
</feature>
<feature type="site" description="Part of a proton relay during catalysis" evidence="1">
    <location>
        <position position="44"/>
    </location>
</feature>
<feature type="site" description="Part of a proton relay during catalysis" evidence="1">
    <location>
        <position position="107"/>
    </location>
</feature>
<feature type="strand" evidence="3">
    <location>
        <begin position="4"/>
        <end position="8"/>
    </location>
</feature>
<feature type="strand" evidence="3">
    <location>
        <begin position="17"/>
        <end position="19"/>
    </location>
</feature>
<feature type="helix" evidence="3">
    <location>
        <begin position="21"/>
        <end position="33"/>
    </location>
</feature>
<feature type="strand" evidence="3">
    <location>
        <begin position="38"/>
        <end position="40"/>
    </location>
</feature>
<feature type="helix" evidence="3">
    <location>
        <begin position="44"/>
        <end position="46"/>
    </location>
</feature>
<feature type="helix" evidence="3">
    <location>
        <begin position="48"/>
        <end position="50"/>
    </location>
</feature>
<feature type="helix" evidence="3">
    <location>
        <begin position="53"/>
        <end position="67"/>
    </location>
</feature>
<feature type="strand" evidence="3">
    <location>
        <begin position="73"/>
        <end position="76"/>
    </location>
</feature>
<feature type="helix" evidence="3">
    <location>
        <begin position="82"/>
        <end position="94"/>
    </location>
</feature>
<feature type="strand" evidence="3">
    <location>
        <begin position="98"/>
        <end position="103"/>
    </location>
</feature>
<feature type="helix" evidence="3">
    <location>
        <begin position="112"/>
        <end position="124"/>
    </location>
</feature>
<feature type="strand" evidence="3">
    <location>
        <begin position="130"/>
        <end position="134"/>
    </location>
</feature>
<feature type="helix" evidence="3">
    <location>
        <begin position="136"/>
        <end position="139"/>
    </location>
</feature>
<feature type="helix" evidence="3">
    <location>
        <begin position="145"/>
        <end position="154"/>
    </location>
</feature>
<feature type="strand" evidence="3">
    <location>
        <begin position="158"/>
        <end position="163"/>
    </location>
</feature>
<feature type="helix" evidence="3">
    <location>
        <begin position="169"/>
        <end position="178"/>
    </location>
</feature>
<feature type="strand" evidence="3">
    <location>
        <begin position="182"/>
        <end position="187"/>
    </location>
</feature>
<feature type="helix" evidence="3">
    <location>
        <begin position="192"/>
        <end position="197"/>
    </location>
</feature>
<feature type="strand" evidence="3">
    <location>
        <begin position="202"/>
        <end position="206"/>
    </location>
</feature>
<feature type="helix" evidence="3">
    <location>
        <begin position="207"/>
        <end position="209"/>
    </location>
</feature>
<feature type="helix" evidence="3">
    <location>
        <begin position="212"/>
        <end position="223"/>
    </location>
</feature>
<feature type="helix" evidence="3">
    <location>
        <begin position="227"/>
        <end position="243"/>
    </location>
</feature>
<feature type="strand" evidence="3">
    <location>
        <begin position="246"/>
        <end position="248"/>
    </location>
</feature>
<feature type="helix" evidence="3">
    <location>
        <begin position="251"/>
        <end position="259"/>
    </location>
</feature>
<feature type="helix" evidence="3">
    <location>
        <begin position="276"/>
        <end position="288"/>
    </location>
</feature>
<reference key="1">
    <citation type="journal article" date="2002" name="Proc. Natl. Acad. Sci. U.S.A.">
        <title>The Brucella suis genome reveals fundamental similarities between animal and plant pathogens and symbionts.</title>
        <authorList>
            <person name="Paulsen I.T."/>
            <person name="Seshadri R."/>
            <person name="Nelson K.E."/>
            <person name="Eisen J.A."/>
            <person name="Heidelberg J.F."/>
            <person name="Read T.D."/>
            <person name="Dodson R.J."/>
            <person name="Umayam L.A."/>
            <person name="Brinkac L.M."/>
            <person name="Beanan M.J."/>
            <person name="Daugherty S.C."/>
            <person name="DeBoy R.T."/>
            <person name="Durkin A.S."/>
            <person name="Kolonay J.F."/>
            <person name="Madupu R."/>
            <person name="Nelson W.C."/>
            <person name="Ayodeji B."/>
            <person name="Kraul M."/>
            <person name="Shetty J."/>
            <person name="Malek J.A."/>
            <person name="Van Aken S.E."/>
            <person name="Riedmuller S."/>
            <person name="Tettelin H."/>
            <person name="Gill S.R."/>
            <person name="White O."/>
            <person name="Salzberg S.L."/>
            <person name="Hoover D.L."/>
            <person name="Lindler L.E."/>
            <person name="Halling S.M."/>
            <person name="Boyle S.M."/>
            <person name="Fraser C.M."/>
        </authorList>
    </citation>
    <scope>NUCLEOTIDE SEQUENCE [LARGE SCALE GENOMIC DNA]</scope>
    <source>
        <strain>1330</strain>
    </source>
</reference>
<reference key="2">
    <citation type="journal article" date="2011" name="J. Bacteriol.">
        <title>Revised genome sequence of Brucella suis 1330.</title>
        <authorList>
            <person name="Tae H."/>
            <person name="Shallom S."/>
            <person name="Settlage R."/>
            <person name="Preston D."/>
            <person name="Adams L.G."/>
            <person name="Garner H.R."/>
        </authorList>
    </citation>
    <scope>NUCLEOTIDE SEQUENCE [LARGE SCALE GENOMIC DNA]</scope>
    <source>
        <strain>1330</strain>
    </source>
</reference>